<name>RL3_BACMK</name>
<accession>A9VP77</accession>
<evidence type="ECO:0000255" key="1">
    <source>
        <dbReference type="HAMAP-Rule" id="MF_01325"/>
    </source>
</evidence>
<evidence type="ECO:0000256" key="2">
    <source>
        <dbReference type="SAM" id="MobiDB-lite"/>
    </source>
</evidence>
<evidence type="ECO:0000305" key="3"/>
<sequence>MTKGILGRKIGMTQVFAENGELIPVTVIAANPNVVLQKKTTETDGYNAIQLGFEDKREKLTNKPEQGHTAKASTTPKRFIREIRDADVDGLEVGQEVKVEVFAAGEIVDVTGISKGKGFQGVIKRHGQSRGPMSHGSRYHRRPGSMGPVAPNRVFKGKKLAGRMGGDQVTIQNLEIVQVDTERNLLLVKGNVPGAKKSLVVVQGAVKVSK</sequence>
<reference key="1">
    <citation type="journal article" date="2008" name="Chem. Biol. Interact.">
        <title>Extending the Bacillus cereus group genomics to putative food-borne pathogens of different toxicity.</title>
        <authorList>
            <person name="Lapidus A."/>
            <person name="Goltsman E."/>
            <person name="Auger S."/>
            <person name="Galleron N."/>
            <person name="Segurens B."/>
            <person name="Dossat C."/>
            <person name="Land M.L."/>
            <person name="Broussolle V."/>
            <person name="Brillard J."/>
            <person name="Guinebretiere M.-H."/>
            <person name="Sanchis V."/>
            <person name="Nguen-the C."/>
            <person name="Lereclus D."/>
            <person name="Richardson P."/>
            <person name="Wincker P."/>
            <person name="Weissenbach J."/>
            <person name="Ehrlich S.D."/>
            <person name="Sorokin A."/>
        </authorList>
    </citation>
    <scope>NUCLEOTIDE SEQUENCE [LARGE SCALE GENOMIC DNA]</scope>
    <source>
        <strain>KBAB4</strain>
    </source>
</reference>
<protein>
    <recommendedName>
        <fullName evidence="1">Large ribosomal subunit protein uL3</fullName>
    </recommendedName>
    <alternativeName>
        <fullName evidence="3">50S ribosomal protein L3</fullName>
    </alternativeName>
</protein>
<feature type="chain" id="PRO_1000141826" description="Large ribosomal subunit protein uL3">
    <location>
        <begin position="1"/>
        <end position="210"/>
    </location>
</feature>
<feature type="region of interest" description="Disordered" evidence="2">
    <location>
        <begin position="125"/>
        <end position="151"/>
    </location>
</feature>
<dbReference type="EMBL" id="CP000903">
    <property type="protein sequence ID" value="ABY41374.1"/>
    <property type="molecule type" value="Genomic_DNA"/>
</dbReference>
<dbReference type="RefSeq" id="WP_000160209.1">
    <property type="nucleotide sequence ID" value="NZ_CAKMRX030000129.1"/>
</dbReference>
<dbReference type="SMR" id="A9VP77"/>
<dbReference type="GeneID" id="92887803"/>
<dbReference type="KEGG" id="bwe:BcerKBAB4_0105"/>
<dbReference type="eggNOG" id="COG0087">
    <property type="taxonomic scope" value="Bacteria"/>
</dbReference>
<dbReference type="HOGENOM" id="CLU_044142_4_1_9"/>
<dbReference type="Proteomes" id="UP000002154">
    <property type="component" value="Chromosome"/>
</dbReference>
<dbReference type="GO" id="GO:0022625">
    <property type="term" value="C:cytosolic large ribosomal subunit"/>
    <property type="evidence" value="ECO:0007669"/>
    <property type="project" value="TreeGrafter"/>
</dbReference>
<dbReference type="GO" id="GO:0019843">
    <property type="term" value="F:rRNA binding"/>
    <property type="evidence" value="ECO:0007669"/>
    <property type="project" value="UniProtKB-UniRule"/>
</dbReference>
<dbReference type="GO" id="GO:0003735">
    <property type="term" value="F:structural constituent of ribosome"/>
    <property type="evidence" value="ECO:0007669"/>
    <property type="project" value="InterPro"/>
</dbReference>
<dbReference type="GO" id="GO:0006412">
    <property type="term" value="P:translation"/>
    <property type="evidence" value="ECO:0007669"/>
    <property type="project" value="UniProtKB-UniRule"/>
</dbReference>
<dbReference type="FunFam" id="2.40.30.10:FF:000004">
    <property type="entry name" value="50S ribosomal protein L3"/>
    <property type="match status" value="1"/>
</dbReference>
<dbReference type="FunFam" id="3.30.160.810:FF:000002">
    <property type="entry name" value="50S ribosomal protein L3"/>
    <property type="match status" value="1"/>
</dbReference>
<dbReference type="Gene3D" id="3.30.160.810">
    <property type="match status" value="1"/>
</dbReference>
<dbReference type="Gene3D" id="2.40.30.10">
    <property type="entry name" value="Translation factors"/>
    <property type="match status" value="1"/>
</dbReference>
<dbReference type="HAMAP" id="MF_01325_B">
    <property type="entry name" value="Ribosomal_uL3_B"/>
    <property type="match status" value="1"/>
</dbReference>
<dbReference type="InterPro" id="IPR000597">
    <property type="entry name" value="Ribosomal_uL3"/>
</dbReference>
<dbReference type="InterPro" id="IPR019927">
    <property type="entry name" value="Ribosomal_uL3_bac/org-type"/>
</dbReference>
<dbReference type="InterPro" id="IPR019926">
    <property type="entry name" value="Ribosomal_uL3_CS"/>
</dbReference>
<dbReference type="InterPro" id="IPR009000">
    <property type="entry name" value="Transl_B-barrel_sf"/>
</dbReference>
<dbReference type="NCBIfam" id="TIGR03625">
    <property type="entry name" value="L3_bact"/>
    <property type="match status" value="1"/>
</dbReference>
<dbReference type="PANTHER" id="PTHR11229">
    <property type="entry name" value="50S RIBOSOMAL PROTEIN L3"/>
    <property type="match status" value="1"/>
</dbReference>
<dbReference type="PANTHER" id="PTHR11229:SF16">
    <property type="entry name" value="LARGE RIBOSOMAL SUBUNIT PROTEIN UL3C"/>
    <property type="match status" value="1"/>
</dbReference>
<dbReference type="Pfam" id="PF00297">
    <property type="entry name" value="Ribosomal_L3"/>
    <property type="match status" value="1"/>
</dbReference>
<dbReference type="SUPFAM" id="SSF50447">
    <property type="entry name" value="Translation proteins"/>
    <property type="match status" value="1"/>
</dbReference>
<dbReference type="PROSITE" id="PS00474">
    <property type="entry name" value="RIBOSOMAL_L3"/>
    <property type="match status" value="1"/>
</dbReference>
<organism>
    <name type="scientific">Bacillus mycoides (strain KBAB4)</name>
    <name type="common">Bacillus weihenstephanensis</name>
    <dbReference type="NCBI Taxonomy" id="315730"/>
    <lineage>
        <taxon>Bacteria</taxon>
        <taxon>Bacillati</taxon>
        <taxon>Bacillota</taxon>
        <taxon>Bacilli</taxon>
        <taxon>Bacillales</taxon>
        <taxon>Bacillaceae</taxon>
        <taxon>Bacillus</taxon>
        <taxon>Bacillus cereus group</taxon>
    </lineage>
</organism>
<comment type="function">
    <text evidence="1">One of the primary rRNA binding proteins, it binds directly near the 3'-end of the 23S rRNA, where it nucleates assembly of the 50S subunit.</text>
</comment>
<comment type="subunit">
    <text evidence="1">Part of the 50S ribosomal subunit. Forms a cluster with proteins L14 and L19.</text>
</comment>
<comment type="similarity">
    <text evidence="1">Belongs to the universal ribosomal protein uL3 family.</text>
</comment>
<keyword id="KW-0687">Ribonucleoprotein</keyword>
<keyword id="KW-0689">Ribosomal protein</keyword>
<keyword id="KW-0694">RNA-binding</keyword>
<keyword id="KW-0699">rRNA-binding</keyword>
<proteinExistence type="inferred from homology"/>
<gene>
    <name evidence="1" type="primary">rplC</name>
    <name type="ordered locus">BcerKBAB4_0105</name>
</gene>